<evidence type="ECO:0000255" key="1">
    <source>
        <dbReference type="HAMAP-Rule" id="MF_01607"/>
    </source>
</evidence>
<evidence type="ECO:0000305" key="2"/>
<keyword id="KW-0238">DNA-binding</keyword>
<keyword id="KW-0804">Transcription</keyword>
<keyword id="KW-0805">Transcription regulation</keyword>
<name>YIDZ_ECODH</name>
<protein>
    <recommendedName>
        <fullName evidence="1">HTH-type transcriptional regulator YidZ</fullName>
    </recommendedName>
</protein>
<reference key="1">
    <citation type="journal article" date="2008" name="J. Bacteriol.">
        <title>The complete genome sequence of Escherichia coli DH10B: insights into the biology of a laboratory workhorse.</title>
        <authorList>
            <person name="Durfee T."/>
            <person name="Nelson R."/>
            <person name="Baldwin S."/>
            <person name="Plunkett G. III"/>
            <person name="Burland V."/>
            <person name="Mau B."/>
            <person name="Petrosino J.F."/>
            <person name="Qin X."/>
            <person name="Muzny D.M."/>
            <person name="Ayele M."/>
            <person name="Gibbs R.A."/>
            <person name="Csorgo B."/>
            <person name="Posfai G."/>
            <person name="Weinstock G.M."/>
            <person name="Blattner F.R."/>
        </authorList>
    </citation>
    <scope>NUCLEOTIDE SEQUENCE [LARGE SCALE GENOMIC DNA]</scope>
    <source>
        <strain>K12 / DH10B</strain>
    </source>
</reference>
<feature type="chain" id="PRO_1000148195" description="HTH-type transcriptional regulator YidZ">
    <location>
        <begin position="1"/>
        <end position="319"/>
    </location>
</feature>
<feature type="domain" description="HTH lysR-type" evidence="1">
    <location>
        <begin position="8"/>
        <end position="65"/>
    </location>
</feature>
<feature type="DNA-binding region" description="H-T-H motif" evidence="1">
    <location>
        <begin position="25"/>
        <end position="44"/>
    </location>
</feature>
<organism>
    <name type="scientific">Escherichia coli (strain K12 / DH10B)</name>
    <dbReference type="NCBI Taxonomy" id="316385"/>
    <lineage>
        <taxon>Bacteria</taxon>
        <taxon>Pseudomonadati</taxon>
        <taxon>Pseudomonadota</taxon>
        <taxon>Gammaproteobacteria</taxon>
        <taxon>Enterobacterales</taxon>
        <taxon>Enterobacteriaceae</taxon>
        <taxon>Escherichia</taxon>
    </lineage>
</organism>
<comment type="function">
    <text evidence="1">Involved in anaerobic NO protection.</text>
</comment>
<comment type="similarity">
    <text evidence="2">Belongs to the LysR transcriptional regulatory family.</text>
</comment>
<gene>
    <name evidence="1" type="primary">yidZ</name>
    <name type="ordered locus">ECDH10B_3898</name>
</gene>
<sequence length="319" mass="36882">MKKSITTLDLNLLLCLQLLMQERSVTKAAKRINVTPSAVSKSLAKLRAWFDDPLFVNSPLGLSPTPLMVSMEQNLAEWMQMSNLLLDKPHHQTPRGLKFELAAESPLMMIMLNALSKQIYQRYPQATIKLRNWDYDSLDAITRGEVDIGFSGRESHPRSRELLSSLPLAIDYEVLFSDVPCVWLRKDHPALHQTWNLDTFLRYPHISICWEQSDTWALDNVLQELGRERTIAMSLPEFEQSLFMAAQPDNLLLATAPRYCQYYNQLHQLPLVALPLPFDESQQKKLEVPFTLLWHKRNSHNPKIVWLRETIKNLYASMA</sequence>
<proteinExistence type="inferred from homology"/>
<accession>B1X9U0</accession>
<dbReference type="EMBL" id="CP000948">
    <property type="protein sequence ID" value="ACB04755.1"/>
    <property type="molecule type" value="Genomic_DNA"/>
</dbReference>
<dbReference type="RefSeq" id="WP_001311238.1">
    <property type="nucleotide sequence ID" value="NC_010473.1"/>
</dbReference>
<dbReference type="SMR" id="B1X9U0"/>
<dbReference type="KEGG" id="ecd:ECDH10B_3898"/>
<dbReference type="HOGENOM" id="CLU_039613_39_2_6"/>
<dbReference type="GO" id="GO:0003677">
    <property type="term" value="F:DNA binding"/>
    <property type="evidence" value="ECO:0007669"/>
    <property type="project" value="UniProtKB-KW"/>
</dbReference>
<dbReference type="GO" id="GO:0003700">
    <property type="term" value="F:DNA-binding transcription factor activity"/>
    <property type="evidence" value="ECO:0007669"/>
    <property type="project" value="UniProtKB-UniRule"/>
</dbReference>
<dbReference type="CDD" id="cd08417">
    <property type="entry name" value="PBP2_Nitroaromatics_like"/>
    <property type="match status" value="1"/>
</dbReference>
<dbReference type="FunFam" id="3.40.190.10:FF:000092">
    <property type="entry name" value="HTH-type transcriptional regulator YidZ"/>
    <property type="match status" value="1"/>
</dbReference>
<dbReference type="Gene3D" id="3.40.190.10">
    <property type="entry name" value="Periplasmic binding protein-like II"/>
    <property type="match status" value="2"/>
</dbReference>
<dbReference type="Gene3D" id="1.10.10.10">
    <property type="entry name" value="Winged helix-like DNA-binding domain superfamily/Winged helix DNA-binding domain"/>
    <property type="match status" value="1"/>
</dbReference>
<dbReference type="HAMAP" id="MF_01607">
    <property type="entry name" value="HTH_type_YidZ"/>
    <property type="match status" value="1"/>
</dbReference>
<dbReference type="InterPro" id="IPR050389">
    <property type="entry name" value="LysR-type_TF"/>
</dbReference>
<dbReference type="InterPro" id="IPR005119">
    <property type="entry name" value="LysR_subst-bd"/>
</dbReference>
<dbReference type="InterPro" id="IPR000847">
    <property type="entry name" value="Tscrpt_reg_HTH_LysR"/>
</dbReference>
<dbReference type="InterPro" id="IPR023746">
    <property type="entry name" value="Tscrpt_reg_YidZ"/>
</dbReference>
<dbReference type="InterPro" id="IPR036388">
    <property type="entry name" value="WH-like_DNA-bd_sf"/>
</dbReference>
<dbReference type="InterPro" id="IPR036390">
    <property type="entry name" value="WH_DNA-bd_sf"/>
</dbReference>
<dbReference type="InterPro" id="IPR037402">
    <property type="entry name" value="YidZ_PBP2"/>
</dbReference>
<dbReference type="NCBIfam" id="NF007581">
    <property type="entry name" value="PRK10216.1"/>
    <property type="match status" value="1"/>
</dbReference>
<dbReference type="PANTHER" id="PTHR30118">
    <property type="entry name" value="HTH-TYPE TRANSCRIPTIONAL REGULATOR LEUO-RELATED"/>
    <property type="match status" value="1"/>
</dbReference>
<dbReference type="PANTHER" id="PTHR30118:SF11">
    <property type="entry name" value="HTH-TYPE TRANSCRIPTIONAL REGULATOR YIDZ"/>
    <property type="match status" value="1"/>
</dbReference>
<dbReference type="Pfam" id="PF00126">
    <property type="entry name" value="HTH_1"/>
    <property type="match status" value="1"/>
</dbReference>
<dbReference type="Pfam" id="PF03466">
    <property type="entry name" value="LysR_substrate"/>
    <property type="match status" value="1"/>
</dbReference>
<dbReference type="SUPFAM" id="SSF53850">
    <property type="entry name" value="Periplasmic binding protein-like II"/>
    <property type="match status" value="1"/>
</dbReference>
<dbReference type="SUPFAM" id="SSF46785">
    <property type="entry name" value="Winged helix' DNA-binding domain"/>
    <property type="match status" value="1"/>
</dbReference>
<dbReference type="PROSITE" id="PS50931">
    <property type="entry name" value="HTH_LYSR"/>
    <property type="match status" value="1"/>
</dbReference>